<evidence type="ECO:0000250" key="1"/>
<evidence type="ECO:0000269" key="2">
    <source>
    </source>
</evidence>
<evidence type="ECO:0000269" key="3">
    <source>
    </source>
</evidence>
<evidence type="ECO:0000269" key="4">
    <source>
    </source>
</evidence>
<evidence type="ECO:0000269" key="5">
    <source>
    </source>
</evidence>
<evidence type="ECO:0000269" key="6">
    <source>
    </source>
</evidence>
<evidence type="ECO:0000269" key="7">
    <source>
    </source>
</evidence>
<evidence type="ECO:0000269" key="8">
    <source>
    </source>
</evidence>
<evidence type="ECO:0000305" key="9"/>
<evidence type="ECO:0007829" key="10">
    <source>
        <dbReference type="PDB" id="5GAE"/>
    </source>
</evidence>
<protein>
    <recommendedName>
        <fullName>Protein translocase subunit SecY</fullName>
    </recommendedName>
</protein>
<sequence length="443" mass="48512">MAKQPGLDFQSAKGGLGELKRRLLFVIGALIVFRIGSFIPIPGIDAAVLAKLLEQQRGTIIEMFNMFSGGALSRASIFALGIMPYISASIIIQLLTVVHPTLAEIKKEGESGRRKISQYTRYGTLVLAIFQSIGIATGLPNMPGMQGLVINPGFAFYFTAVVSLVTGTMFLMWLGEQITERGIGNGISIIIFAGIVAGLPPAIAHTIEQARQGDLHFLVLLLVAVLVFAVTFFVVFVERGQRRIVVNYAKRQQGRRVYAAQSTHLPLKVNMAGVIPAIFASSIILFPATIASWFGGGTGWNWLTTISLYLQPGQPLYVLLYASAIIFFCFFYTALVFNPRETADNLKKSGAFVPGIRPGEQTAKYIDKVMTRLTLVGALYITFICLIPEFMRDAMKVPFYFGGTSLLIVVVVIMDFMAQVQTLMMSSQYESALKKANLKGYGR</sequence>
<dbReference type="EMBL" id="X01563">
    <property type="protein sequence ID" value="CAA25725.1"/>
    <property type="molecule type" value="Genomic_DNA"/>
</dbReference>
<dbReference type="EMBL" id="U18997">
    <property type="protein sequence ID" value="AAA58097.1"/>
    <property type="molecule type" value="Genomic_DNA"/>
</dbReference>
<dbReference type="EMBL" id="U00096">
    <property type="protein sequence ID" value="AAC76325.1"/>
    <property type="molecule type" value="Genomic_DNA"/>
</dbReference>
<dbReference type="EMBL" id="AP009048">
    <property type="protein sequence ID" value="BAE77991.1"/>
    <property type="molecule type" value="Genomic_DNA"/>
</dbReference>
<dbReference type="PIR" id="A04473">
    <property type="entry name" value="QQECSY"/>
</dbReference>
<dbReference type="RefSeq" id="NP_417759.1">
    <property type="nucleotide sequence ID" value="NC_000913.3"/>
</dbReference>
<dbReference type="RefSeq" id="WP_001118861.1">
    <property type="nucleotide sequence ID" value="NZ_STEB01000038.1"/>
</dbReference>
<dbReference type="PDB" id="2AKH">
    <property type="method" value="EM"/>
    <property type="resolution" value="14.90 A"/>
    <property type="chains" value="B/Y=1-436"/>
</dbReference>
<dbReference type="PDB" id="2AKI">
    <property type="method" value="EM"/>
    <property type="resolution" value="14.90 A"/>
    <property type="chains" value="B/Y=1-436"/>
</dbReference>
<dbReference type="PDB" id="3J45">
    <property type="method" value="EM"/>
    <property type="resolution" value="9.50 A"/>
    <property type="chains" value="y=6-440"/>
</dbReference>
<dbReference type="PDB" id="3J46">
    <property type="method" value="EM"/>
    <property type="resolution" value="10.10 A"/>
    <property type="chains" value="y=6-440"/>
</dbReference>
<dbReference type="PDB" id="4V6M">
    <property type="method" value="EM"/>
    <property type="chains" value="A=8-442"/>
</dbReference>
<dbReference type="PDB" id="5ABB">
    <property type="method" value="EM"/>
    <property type="resolution" value="8.00 A"/>
    <property type="chains" value="A=1-443"/>
</dbReference>
<dbReference type="PDB" id="5GAE">
    <property type="method" value="EM"/>
    <property type="resolution" value="3.33 A"/>
    <property type="chains" value="g=1-443"/>
</dbReference>
<dbReference type="PDB" id="5MG3">
    <property type="method" value="EM"/>
    <property type="resolution" value="14.00 A"/>
    <property type="chains" value="Y=1-443"/>
</dbReference>
<dbReference type="PDB" id="5NCO">
    <property type="method" value="EM"/>
    <property type="resolution" value="4.80 A"/>
    <property type="chains" value="g=14-429"/>
</dbReference>
<dbReference type="PDB" id="6R7L">
    <property type="method" value="EM"/>
    <property type="resolution" value="6.00 A"/>
    <property type="chains" value="Y=1-443"/>
</dbReference>
<dbReference type="PDBsum" id="2AKH"/>
<dbReference type="PDBsum" id="2AKI"/>
<dbReference type="PDBsum" id="3J45"/>
<dbReference type="PDBsum" id="3J46"/>
<dbReference type="PDBsum" id="4V6M"/>
<dbReference type="PDBsum" id="5ABB"/>
<dbReference type="PDBsum" id="5GAE"/>
<dbReference type="PDBsum" id="5MG3"/>
<dbReference type="PDBsum" id="5NCO"/>
<dbReference type="PDBsum" id="6R7L"/>
<dbReference type="EMDB" id="EMD-2446"/>
<dbReference type="EMDB" id="EMD-3506"/>
<dbReference type="EMDB" id="EMD-3617"/>
<dbReference type="EMDB" id="EMD-4743"/>
<dbReference type="EMDB" id="EMD-8001"/>
<dbReference type="SMR" id="P0AGA2"/>
<dbReference type="BioGRID" id="4263404">
    <property type="interactions" value="365"/>
</dbReference>
<dbReference type="ComplexPortal" id="CPX-1095">
    <property type="entry name" value="Holo-translocon SecYEG-SecDF-YajC-YidC complex"/>
</dbReference>
<dbReference type="ComplexPortal" id="CPX-1096">
    <property type="entry name" value="Protein-conducting channel SecYEG complex"/>
</dbReference>
<dbReference type="DIP" id="DIP-59302N"/>
<dbReference type="FunCoup" id="P0AGA2">
    <property type="interactions" value="749"/>
</dbReference>
<dbReference type="IntAct" id="P0AGA2">
    <property type="interactions" value="5"/>
</dbReference>
<dbReference type="STRING" id="511145.b3300"/>
<dbReference type="TCDB" id="3.A.5.1.1">
    <property type="family name" value="the general secretory pathway (sec) family"/>
</dbReference>
<dbReference type="jPOST" id="P0AGA2"/>
<dbReference type="PaxDb" id="511145-b3300"/>
<dbReference type="EnsemblBacteria" id="AAC76325">
    <property type="protein sequence ID" value="AAC76325"/>
    <property type="gene ID" value="b3300"/>
</dbReference>
<dbReference type="GeneID" id="86862302"/>
<dbReference type="GeneID" id="947799"/>
<dbReference type="KEGG" id="ecj:JW3262"/>
<dbReference type="KEGG" id="eco:b3300"/>
<dbReference type="KEGG" id="ecoc:C3026_17940"/>
<dbReference type="PATRIC" id="fig|1411691.4.peg.3431"/>
<dbReference type="EchoBASE" id="EB0759"/>
<dbReference type="eggNOG" id="COG0201">
    <property type="taxonomic scope" value="Bacteria"/>
</dbReference>
<dbReference type="HOGENOM" id="CLU_030313_0_2_6"/>
<dbReference type="InParanoid" id="P0AGA2"/>
<dbReference type="OMA" id="FAMWLGE"/>
<dbReference type="OrthoDB" id="9809248at2"/>
<dbReference type="PhylomeDB" id="P0AGA2"/>
<dbReference type="BioCyc" id="EcoCyc:SECY"/>
<dbReference type="BioCyc" id="MetaCyc:SECY"/>
<dbReference type="EvolutionaryTrace" id="P0AGA2"/>
<dbReference type="PRO" id="PR:P0AGA2"/>
<dbReference type="Proteomes" id="UP000000625">
    <property type="component" value="Chromosome"/>
</dbReference>
<dbReference type="GO" id="GO:0031522">
    <property type="term" value="C:cell envelope Sec protein transport complex"/>
    <property type="evidence" value="ECO:0000314"/>
    <property type="project" value="EcoCyc"/>
</dbReference>
<dbReference type="GO" id="GO:0016020">
    <property type="term" value="C:membrane"/>
    <property type="evidence" value="ECO:0000314"/>
    <property type="project" value="EcoliWiki"/>
</dbReference>
<dbReference type="GO" id="GO:0005886">
    <property type="term" value="C:plasma membrane"/>
    <property type="evidence" value="ECO:0000314"/>
    <property type="project" value="CACAO"/>
</dbReference>
<dbReference type="GO" id="GO:0008320">
    <property type="term" value="F:protein transmembrane transporter activity"/>
    <property type="evidence" value="ECO:0000314"/>
    <property type="project" value="EcoCyc"/>
</dbReference>
<dbReference type="GO" id="GO:0005048">
    <property type="term" value="F:signal sequence binding"/>
    <property type="evidence" value="ECO:0000314"/>
    <property type="project" value="EcoCyc"/>
</dbReference>
<dbReference type="GO" id="GO:0065002">
    <property type="term" value="P:intracellular protein transmembrane transport"/>
    <property type="evidence" value="ECO:0000314"/>
    <property type="project" value="EcoCyc"/>
</dbReference>
<dbReference type="GO" id="GO:0006886">
    <property type="term" value="P:intracellular protein transport"/>
    <property type="evidence" value="ECO:0000315"/>
    <property type="project" value="EcoliWiki"/>
</dbReference>
<dbReference type="GO" id="GO:0032978">
    <property type="term" value="P:protein insertion into membrane from inner side"/>
    <property type="evidence" value="ECO:0000314"/>
    <property type="project" value="EcoCyc"/>
</dbReference>
<dbReference type="GO" id="GO:0043952">
    <property type="term" value="P:protein transport by the Sec complex"/>
    <property type="evidence" value="ECO:0000314"/>
    <property type="project" value="ComplexPortal"/>
</dbReference>
<dbReference type="GO" id="GO:0006616">
    <property type="term" value="P:SRP-dependent cotranslational protein targeting to membrane, translocation"/>
    <property type="evidence" value="ECO:0000314"/>
    <property type="project" value="EcoCyc"/>
</dbReference>
<dbReference type="FunFam" id="1.10.3370.10:FF:000001">
    <property type="entry name" value="Preprotein translocase subunit SecY"/>
    <property type="match status" value="1"/>
</dbReference>
<dbReference type="Gene3D" id="1.10.3370.10">
    <property type="entry name" value="SecY subunit domain"/>
    <property type="match status" value="1"/>
</dbReference>
<dbReference type="HAMAP" id="MF_01465">
    <property type="entry name" value="SecY"/>
    <property type="match status" value="1"/>
</dbReference>
<dbReference type="InterPro" id="IPR026593">
    <property type="entry name" value="SecY"/>
</dbReference>
<dbReference type="InterPro" id="IPR002208">
    <property type="entry name" value="SecY/SEC61-alpha"/>
</dbReference>
<dbReference type="InterPro" id="IPR030659">
    <property type="entry name" value="SecY_CS"/>
</dbReference>
<dbReference type="InterPro" id="IPR023201">
    <property type="entry name" value="SecY_dom_sf"/>
</dbReference>
<dbReference type="NCBIfam" id="TIGR00967">
    <property type="entry name" value="3a0501s007"/>
    <property type="match status" value="1"/>
</dbReference>
<dbReference type="PANTHER" id="PTHR10906">
    <property type="entry name" value="SECY/SEC61-ALPHA FAMILY MEMBER"/>
    <property type="match status" value="1"/>
</dbReference>
<dbReference type="Pfam" id="PF00344">
    <property type="entry name" value="SecY"/>
    <property type="match status" value="1"/>
</dbReference>
<dbReference type="PIRSF" id="PIRSF004557">
    <property type="entry name" value="SecY"/>
    <property type="match status" value="1"/>
</dbReference>
<dbReference type="PRINTS" id="PR00303">
    <property type="entry name" value="SECYTRNLCASE"/>
</dbReference>
<dbReference type="SUPFAM" id="SSF103491">
    <property type="entry name" value="Preprotein translocase SecY subunit"/>
    <property type="match status" value="1"/>
</dbReference>
<dbReference type="PROSITE" id="PS00755">
    <property type="entry name" value="SECY_1"/>
    <property type="match status" value="1"/>
</dbReference>
<dbReference type="PROSITE" id="PS00756">
    <property type="entry name" value="SECY_2"/>
    <property type="match status" value="1"/>
</dbReference>
<reference key="1">
    <citation type="journal article" date="1983" name="Nucleic Acids Res.">
        <title>The spc ribosomal protein operon of Escherichia coli: sequence and cotranscription of the ribosomal protein genes and a protein export gene.</title>
        <authorList>
            <person name="Cerretti D.P."/>
            <person name="Dean D."/>
            <person name="Davis G.R."/>
            <person name="Bedwell D.M."/>
            <person name="Nomura M."/>
        </authorList>
    </citation>
    <scope>NUCLEOTIDE SEQUENCE [GENOMIC DNA]</scope>
    <source>
        <strain>K12</strain>
    </source>
</reference>
<reference key="2">
    <citation type="journal article" date="1997" name="Science">
        <title>The complete genome sequence of Escherichia coli K-12.</title>
        <authorList>
            <person name="Blattner F.R."/>
            <person name="Plunkett G. III"/>
            <person name="Bloch C.A."/>
            <person name="Perna N.T."/>
            <person name="Burland V."/>
            <person name="Riley M."/>
            <person name="Collado-Vides J."/>
            <person name="Glasner J.D."/>
            <person name="Rode C.K."/>
            <person name="Mayhew G.F."/>
            <person name="Gregor J."/>
            <person name="Davis N.W."/>
            <person name="Kirkpatrick H.A."/>
            <person name="Goeden M.A."/>
            <person name="Rose D.J."/>
            <person name="Mau B."/>
            <person name="Shao Y."/>
        </authorList>
    </citation>
    <scope>NUCLEOTIDE SEQUENCE [LARGE SCALE GENOMIC DNA]</scope>
    <source>
        <strain>K12 / MG1655 / ATCC 47076</strain>
    </source>
</reference>
<reference key="3">
    <citation type="journal article" date="2006" name="Mol. Syst. Biol.">
        <title>Highly accurate genome sequences of Escherichia coli K-12 strains MG1655 and W3110.</title>
        <authorList>
            <person name="Hayashi K."/>
            <person name="Morooka N."/>
            <person name="Yamamoto Y."/>
            <person name="Fujita K."/>
            <person name="Isono K."/>
            <person name="Choi S."/>
            <person name="Ohtsubo E."/>
            <person name="Baba T."/>
            <person name="Wanner B.L."/>
            <person name="Mori H."/>
            <person name="Horiuchi T."/>
        </authorList>
    </citation>
    <scope>NUCLEOTIDE SEQUENCE [LARGE SCALE GENOMIC DNA]</scope>
    <source>
        <strain>K12 / W3110 / ATCC 27325 / DSM 5911</strain>
    </source>
</reference>
<reference key="4">
    <citation type="journal article" date="1987" name="EMBO J.">
        <title>Topology analysis of the SecY protein, an integral membrane protein involved in protein export in Escherichia coli.</title>
        <authorList>
            <person name="Akiyama Y."/>
            <person name="Ito K."/>
        </authorList>
    </citation>
    <scope>TOPOLOGY</scope>
</reference>
<reference key="5">
    <citation type="journal article" date="1989" name="J. Bacteriol.">
        <title>Temperature-sensitive sec mutants of Escherichia coli: inhibition of protein export at the permissive temperature.</title>
        <authorList>
            <person name="Ito K."/>
            <person name="Hirota Y."/>
            <person name="Akiyama Y."/>
        </authorList>
    </citation>
    <scope>MUTANT SECY100</scope>
</reference>
<reference key="6">
    <citation type="journal article" date="1989" name="J. Biol. Chem.">
        <title>Export of Escherichia coli alkaline phosphatase attached to an integral membrane protein, SecY.</title>
        <authorList>
            <person name="Akiyama Y."/>
            <person name="Ito K."/>
        </authorList>
    </citation>
    <scope>REQUIRED FOR ITS OWN INSERTION INTO MEMBRANES</scope>
    <source>
        <strain>K12 / MC4100</strain>
    </source>
</reference>
<reference key="7">
    <citation type="journal article" date="1990" name="J. Bacteriol.">
        <title>Characterization of cold-sensitive secY mutants of Escherichia coli.</title>
        <authorList>
            <person name="Baba T."/>
            <person name="Jacq A."/>
            <person name="Brickman E."/>
            <person name="Beckwith J."/>
            <person name="Taura T."/>
            <person name="Ueguchi C."/>
            <person name="Akiyama Y."/>
            <person name="Ito K."/>
        </authorList>
    </citation>
    <scope>MUTANTS SECY39 AND SECY40</scope>
</reference>
<reference key="8">
    <citation type="journal article" date="1991" name="J. Bacteriol.">
        <title>Novel prlA alleles defective in supporting staphylokinase processing in Escherichia coli.</title>
        <authorList>
            <person name="Sako T."/>
        </authorList>
    </citation>
    <scope>MUTANTS SECY121 AND SECY161</scope>
</reference>
<reference key="9">
    <citation type="journal article" date="1992" name="Eur. J. Biochem.">
        <title>Biochemical analysis of the biogenesis and function of the Escherichia coli export factor SecY.</title>
        <authorList>
            <person name="Swidersky U.E."/>
            <person name="Rienhoefer-Schweer A."/>
            <person name="Werner P.K."/>
            <person name="Ernst F."/>
            <person name="Benson S.A."/>
            <person name="Hoffschulte H.K."/>
            <person name="Mueller M."/>
        </authorList>
    </citation>
    <scope>CHARACTERIZATION</scope>
</reference>
<reference key="10">
    <citation type="journal article" date="1993" name="EMBO J.">
        <title>PrlA suppressor mutations cluster in regions corresponding to three distinct topological domains.</title>
        <authorList>
            <person name="Osborne R.S."/>
            <person name="Silhavy T.J."/>
        </authorList>
    </citation>
    <scope>MUTANTS</scope>
</reference>
<reference key="11">
    <citation type="journal article" date="1994" name="Proc. Natl. Acad. Sci. U.S.A.">
        <title>A cytoplasmic domain is important for the formation of a SecY-SecE translocator complex.</title>
        <authorList>
            <person name="Baba T."/>
            <person name="Taura T."/>
            <person name="Shimoike T."/>
            <person name="Akiyama Y."/>
            <person name="Yoshihisa T."/>
            <person name="Ito K."/>
        </authorList>
    </citation>
    <scope>MUTAGENESIS OF GLY-240</scope>
    <source>
        <strain>K12 / MC4100</strain>
    </source>
</reference>
<reference key="12">
    <citation type="journal article" date="1995" name="EMBO J.">
        <title>The allele-specific synthetic lethality of prlA-prlG double mutants predicts interactive domains of SecY and SecE.</title>
        <authorList>
            <person name="Flower A.M."/>
            <person name="Osborne R.S."/>
            <person name="Silhavy T.J."/>
        </authorList>
    </citation>
    <scope>MUTANTS</scope>
</reference>
<reference key="13">
    <citation type="journal article" date="1995" name="Proc. Natl. Acad. Sci. U.S.A.">
        <title>FtsH is required for proteolytic elimination of uncomplexed forms of SecY, an essential protein translocase subunit.</title>
        <authorList>
            <person name="Kihara A."/>
            <person name="Akiyama Y."/>
            <person name="Ito K."/>
        </authorList>
    </citation>
    <scope>DEGRADATION BY FTSH</scope>
</reference>
<reference key="14">
    <citation type="journal article" date="2001" name="EMBO Rep.">
        <title>Sec-dependent membrane protein insertion: sequential interaction of nascent FtsQ with SecY and YidC.</title>
        <authorList>
            <person name="Urbanus M.L."/>
            <person name="Scotti P.A."/>
            <person name="Froderberg L."/>
            <person name="Saaf A."/>
            <person name="de Gier J.W."/>
            <person name="Brunner J."/>
            <person name="Samuelson J.C."/>
            <person name="Dalbey R.E."/>
            <person name="Oudega B."/>
            <person name="Luirink J."/>
        </authorList>
    </citation>
    <scope>INTERACTION WITH FTSQ BEFORE YIDC</scope>
</reference>
<reference key="15">
    <citation type="journal article" date="2005" name="Science">
        <title>Global topology analysis of the Escherichia coli inner membrane proteome.</title>
        <authorList>
            <person name="Daley D.O."/>
            <person name="Rapp M."/>
            <person name="Granseth E."/>
            <person name="Melen K."/>
            <person name="Drew D."/>
            <person name="von Heijne G."/>
        </authorList>
    </citation>
    <scope>TOPOLOGY [LARGE SCALE ANALYSIS]</scope>
    <source>
        <strain>K12 / MG1655 / ATCC 47076</strain>
    </source>
</reference>
<reference key="16">
    <citation type="journal article" date="2007" name="Cell">
        <title>Protein translocation is mediated by oligomers of the SecY complex with one SecY copy forming the channel.</title>
        <authorList>
            <person name="Osborne A.R."/>
            <person name="Rapoport T.A."/>
        </authorList>
    </citation>
    <scope>INTERACTION WITH SECA</scope>
    <scope>CHARACTERIZATION OF THE TRANSLOCATING PORE</scope>
</reference>
<reference key="17">
    <citation type="journal article" date="2009" name="Science">
        <title>Effects of antibiotics and a proto-oncogene homolog on destruction of protein translocator SecY.</title>
        <authorList>
            <person name="van Stelten J."/>
            <person name="Silva F."/>
            <person name="Belin D."/>
            <person name="Silhavy T.J."/>
        </authorList>
    </citation>
    <scope>COMPLEX DEGRADATION</scope>
    <source>
        <strain>K12 / MC4100</strain>
    </source>
</reference>
<reference key="18">
    <citation type="journal article" date="2007" name="Mol. Cell">
        <title>Determining the conductance of the SecY protein translocation channel for small molecules.</title>
        <authorList>
            <person name="Saparov S.M."/>
            <person name="Erlandson K."/>
            <person name="Cannon K."/>
            <person name="Schaletzky J."/>
            <person name="Schulman S."/>
            <person name="Rapoport T.A."/>
            <person name="Pohl P."/>
        </authorList>
    </citation>
    <scope>CHARACTERIZATION OF CHANNEL OPENING</scope>
    <scope>MUTAGENESIS OF 60-ILE--ARG-74; 65-ASN--GLY-70; PHE-67 AND ILE-408</scope>
</reference>
<reference key="19">
    <citation type="journal article" date="2007" name="Mol. Cell">
        <title>The plug domain of the SecY protein stabilizes the closed state of the translocation channel and maintains a membrane seal.</title>
        <authorList>
            <person name="Li W."/>
            <person name="Schulman S."/>
            <person name="Boyd D."/>
            <person name="Erlandson K."/>
            <person name="Beckwith J."/>
            <person name="Rapoport T.A."/>
        </authorList>
    </citation>
    <scope>MUTAGENESIS OF 60-ILE--ARG-74 AND 65-ASN--GLY-70</scope>
</reference>
<reference key="20">
    <citation type="journal article" date="2010" name="Proc. Natl. Acad. Sci. U.S.A.">
        <title>Lateral opening of a translocon upon entry of protein suggests the mechanism of insertion into membranes.</title>
        <authorList>
            <person name="Egea P.F."/>
            <person name="Stroud R.M."/>
        </authorList>
    </citation>
    <scope>MUTAGENESIS OF 424-MET--ARG-443</scope>
    <source>
        <strain>ATCC 43587 / DSM 3638 / JCM 8422 / Vc1</strain>
    </source>
</reference>
<reference key="21">
    <citation type="journal article" date="2016" name="Biochem. J.">
        <title>Membrane protein insertion and assembly by the bacterial holo-translocon SecYEG-SecDF-YajC-YidC.</title>
        <authorList>
            <person name="Komar J."/>
            <person name="Alvira S."/>
            <person name="Schulze R.J."/>
            <person name="Martin R."/>
            <person name="Lycklama a Nijeholt J.A."/>
            <person name="Lee S.C."/>
            <person name="Dafforn T.R."/>
            <person name="Deckers-Hebestreit G."/>
            <person name="Berger I."/>
            <person name="Schaffitzel C."/>
            <person name="Collinson I."/>
        </authorList>
    </citation>
    <scope>FUNCTION</scope>
    <scope>SUBUNIT</scope>
    <scope>SUBCELLULAR LOCATION</scope>
    <source>
        <strain>BL21-DE3</strain>
    </source>
</reference>
<reference key="22">
    <citation type="journal article" date="2005" name="Nature">
        <title>Structure of the E. coli protein-conducting channel bound to a translating ribosome.</title>
        <authorList>
            <person name="Mitra K."/>
            <person name="Schaffitzel C."/>
            <person name="Shaikh T."/>
            <person name="Tama F."/>
            <person name="Jenni S."/>
            <person name="Brooks C.L. III"/>
            <person name="Ban N."/>
            <person name="Frank J."/>
        </authorList>
    </citation>
    <scope>STRUCTURE BY ELECTRON MICROSCOPY (14.9 ANGSTROMS) OF 1-436 IN COMPLEX WITH THE RIBOSOME AND A NASCENT POLYPEPTIDE CHAIN</scope>
    <source>
        <strain>MRE-600</strain>
    </source>
</reference>
<reference key="23">
    <citation type="journal article" date="2011" name="Nat. Struct. Mol. Biol.">
        <title>Cryo-EM structure of the ribosome-SecYE complex in the membrane environment.</title>
        <authorList>
            <person name="Frauenfeld J."/>
            <person name="Gumbart J."/>
            <person name="Sluis E.O."/>
            <person name="Funes S."/>
            <person name="Gartmann M."/>
            <person name="Beatrix B."/>
            <person name="Mielke T."/>
            <person name="Berninghausen O."/>
            <person name="Becker T."/>
            <person name="Schulten K."/>
            <person name="Beckmann R."/>
        </authorList>
    </citation>
    <scope>STRUCTURE BY CRYOELECTRON MICROSCOPY IN COMPLEX WITH THE RIBOSOME AND A NASCENT POLYPEPTIDE CHAIN</scope>
</reference>
<reference key="24">
    <citation type="journal article" date="1990" name="J. Bioenerg. Biomembr.">
        <title>Structure, function, and biogenesis of SecY, an integral membrane protein involved in protein export.</title>
        <authorList>
            <person name="Ito K."/>
        </authorList>
    </citation>
    <scope>REVIEW</scope>
</reference>
<reference key="25">
    <citation type="journal article" date="2008" name="Annu. Rev. Biochem.">
        <title>Protein translocation across the bacterial cytoplasmic membrane.</title>
        <authorList>
            <person name="Driessen A.J."/>
            <person name="Nouwen N."/>
        </authorList>
    </citation>
    <scope>REVIEW</scope>
</reference>
<keyword id="KW-0002">3D-structure</keyword>
<keyword id="KW-0997">Cell inner membrane</keyword>
<keyword id="KW-1003">Cell membrane</keyword>
<keyword id="KW-0472">Membrane</keyword>
<keyword id="KW-0653">Protein transport</keyword>
<keyword id="KW-1185">Reference proteome</keyword>
<keyword id="KW-0811">Translocation</keyword>
<keyword id="KW-0812">Transmembrane</keyword>
<keyword id="KW-1133">Transmembrane helix</keyword>
<keyword id="KW-0813">Transport</keyword>
<comment type="function">
    <text>The central subunit of the protein translocation channel SecYEG. Consists of two halves formed by TMs 1-5 and 6-10. These two domains form a lateral gate at the front which open onto the bilayer between TMs 2 and 7, and are clamped together by SecE at the back. The channel is closed by both a pore ring composed of hydrophobic SecY resides and a short helix (helix 2A) on the extracellular side of the membrane which forms a plug. The plug probably moves laterally to allow the channel to open. The ring and the pore may move independently. SecY is required to insert newly synthesized SecY into the inner membrane. Overexpression of some hybrid proteins has been thought to jam the protein secretion apparatus resulting in cell death; while this may be true, overexpression also results in FtsH-mediated degradation of SecY.</text>
</comment>
<comment type="subunit">
    <text evidence="2 3 7">Component of the Sec protein translocase complex. Heterotrimer consisting of SecY, SecE and SecG subunits. The heterotrimers can form oligomers, although 1 heterotrimer is thought to be able to translocate proteins. Interacts with the ribosome. Interacts with SecDF-YajC and YidC; YidC interacts with nascent inner membrane proteins after SecY. The SecDF-YidC-YajC translocase forms a supercomplex with SecYEG, called the holo-translocon (HTL) (PubMed:27435098). The stoichiometry of the super complex may be SecYEG:YidC:SecDF 4:3:1, YajC is in the reconstituted complex (with SecDF) but as no antibody is available it could not be quantified (PubMed:27435098). SecY probably contacts the 23S rRNA and possibly also ribosomal protein L23 during ribosome docking. A single SecY molecule forms the translocating pore, although interaction with SecA may require oligomers.</text>
</comment>
<comment type="interaction">
    <interactant intactId="EBI-761422">
        <id>P0AGA2</id>
    </interactant>
    <interactant intactId="EBI-371347">
        <id>P0A910</id>
        <label>ompA</label>
    </interactant>
    <organismsDiffer>false</organismsDiffer>
    <experiments>2</experiments>
</comment>
<comment type="interaction">
    <interactant intactId="EBI-761422">
        <id>P0AGA2</id>
    </interactant>
    <interactant intactId="EBI-543213">
        <id>P10408</id>
        <label>secA</label>
    </interactant>
    <organismsDiffer>false</organismsDiffer>
    <experiments>6</experiments>
</comment>
<comment type="interaction">
    <interactant intactId="EBI-761422">
        <id>P0AGA2</id>
    </interactant>
    <interactant intactId="EBI-6404267">
        <id>P0AG96</id>
        <label>secE</label>
    </interactant>
    <organismsDiffer>false</organismsDiffer>
    <experiments>5</experiments>
</comment>
<comment type="interaction">
    <interactant intactId="EBI-761422">
        <id>P0AGA2</id>
    </interactant>
    <interactant intactId="EBI-6404248">
        <id>P0AG99</id>
        <label>secG</label>
    </interactant>
    <organismsDiffer>false</organismsDiffer>
    <experiments>3</experiments>
</comment>
<comment type="subcellular location">
    <subcellularLocation>
        <location>Cell inner membrane</location>
        <topology>Multi-pass membrane protein</topology>
    </subcellularLocation>
</comment>
<comment type="PTM">
    <text>SecY that is not part of the protein translocation apparatus is degraded by FtsH. Also degraded by FtsH when the SecYEG complex is jammed, or upon treatment with antibiotics that block translation elongation such as chloramphenicol.</text>
</comment>
<comment type="similarity">
    <text evidence="9">Belongs to the SecY/SEC61-alpha family.</text>
</comment>
<proteinExistence type="evidence at protein level"/>
<name>SECY_ECOLI</name>
<gene>
    <name type="primary">secY</name>
    <name type="synonym">prlA</name>
    <name type="ordered locus">b3300</name>
    <name type="ordered locus">JW3262</name>
</gene>
<accession>P0AGA2</accession>
<accession>P03844</accession>
<accession>Q2M6W5</accession>
<feature type="chain" id="PRO_0000131721" description="Protein translocase subunit SecY">
    <location>
        <begin position="1"/>
        <end position="443"/>
    </location>
</feature>
<feature type="topological domain" description="Cytoplasmic" evidence="9">
    <location>
        <begin position="1"/>
        <end position="22"/>
    </location>
</feature>
<feature type="transmembrane region" description="Helical; Name=1" evidence="9">
    <location>
        <begin position="23"/>
        <end position="35"/>
    </location>
</feature>
<feature type="topological domain" description="Periplasmic" evidence="1">
    <location>
        <begin position="36"/>
        <end position="60"/>
    </location>
</feature>
<feature type="transmembrane region" description="Discontinuously helical; Name=2" evidence="1">
    <location>
        <begin position="61"/>
        <end position="96"/>
    </location>
</feature>
<feature type="intramembrane region" description="Helical; Name=Helix 2A" evidence="9">
    <location>
        <begin position="61"/>
        <end position="70"/>
    </location>
</feature>
<feature type="intramembrane region" evidence="9">
    <location>
        <begin position="71"/>
        <end position="76"/>
    </location>
</feature>
<feature type="intramembrane region" description="Helical; Name=Helix 2B" evidence="9">
    <location>
        <begin position="77"/>
        <end position="96"/>
    </location>
</feature>
<feature type="topological domain" description="Cytoplasmic" evidence="9">
    <location>
        <begin position="97"/>
        <end position="115"/>
    </location>
</feature>
<feature type="transmembrane region" description="Helical; Name=3" evidence="9">
    <location>
        <begin position="116"/>
        <end position="131"/>
    </location>
</feature>
<feature type="topological domain" description="Periplasmic" evidence="9">
    <location>
        <begin position="132"/>
        <end position="164"/>
    </location>
</feature>
<feature type="transmembrane region" description="Helical; Name=4" evidence="9">
    <location>
        <begin position="165"/>
        <end position="178"/>
    </location>
</feature>
<feature type="topological domain" description="Cytoplasmic" evidence="9">
    <location>
        <begin position="179"/>
        <end position="183"/>
    </location>
</feature>
<feature type="transmembrane region" description="Helical; Name=5" evidence="9">
    <location>
        <begin position="184"/>
        <end position="200"/>
    </location>
</feature>
<feature type="topological domain" description="Periplasmic" evidence="9">
    <location>
        <begin position="201"/>
        <end position="223"/>
    </location>
</feature>
<feature type="transmembrane region" description="Helical; Name=6" evidence="9">
    <location>
        <begin position="224"/>
        <end position="237"/>
    </location>
</feature>
<feature type="topological domain" description="Cytoplasmic" evidence="9">
    <location>
        <begin position="238"/>
        <end position="273"/>
    </location>
</feature>
<feature type="transmembrane region" description="Helical; Name=7" evidence="9">
    <location>
        <begin position="274"/>
        <end position="287"/>
    </location>
</feature>
<feature type="topological domain" description="Periplasmic" evidence="9">
    <location>
        <begin position="288"/>
        <end position="313"/>
    </location>
</feature>
<feature type="transmembrane region" description="Helical; Name=8" evidence="9">
    <location>
        <begin position="314"/>
        <end position="329"/>
    </location>
</feature>
<feature type="topological domain" description="Cytoplasmic" evidence="9">
    <location>
        <begin position="330"/>
        <end position="380"/>
    </location>
</feature>
<feature type="transmembrane region" description="Helical; Name=9" evidence="9">
    <location>
        <begin position="381"/>
        <end position="395"/>
    </location>
</feature>
<feature type="topological domain" description="Periplasmic" evidence="9">
    <location>
        <position position="396"/>
    </location>
</feature>
<feature type="transmembrane region" description="Helical; Name=10" evidence="9">
    <location>
        <begin position="397"/>
        <end position="413"/>
    </location>
</feature>
<feature type="topological domain" description="Cytoplasmic" evidence="9">
    <location>
        <begin position="414"/>
        <end position="443"/>
    </location>
</feature>
<feature type="mutagenesis site" description="In secY100; temperature-sensitive.">
    <original>P</original>
    <variation>S</variation>
    <location>
        <position position="40"/>
    </location>
</feature>
<feature type="mutagenesis site" description="Some loss of viability, supports protein translocation; strongly suppresses defective and missing signal sequences; transient transmembrane channels open." evidence="4 5">
    <location>
        <begin position="60"/>
        <end position="74"/>
    </location>
</feature>
<feature type="mutagenesis site" description="Grows almost as well as wild-type, supports protein translocation; strongly suppresses defective and missing signal sequences; transient transmembrane channels open." evidence="4 5">
    <location>
        <begin position="65"/>
        <end position="70"/>
    </location>
</feature>
<feature type="mutagenesis site" description="In prlA3; altered signal sequence interaction, transient channel opening and closing in presence of oxidant; massive ion flux when cross-linked to SecE C-120 mutation." evidence="4">
    <original>F</original>
    <variation>C</variation>
    <location>
        <position position="67"/>
    </location>
</feature>
<feature type="mutagenesis site" description="In secY100; temperature-sensitive.">
    <original>G</original>
    <variation>E</variation>
    <location>
        <position position="167"/>
    </location>
</feature>
<feature type="mutagenesis site" description="In secY24; temperature-sensitive at 42 degrees Celsius, impairs interaction with SecE even at 30 degrees in vitro." evidence="8">
    <original>G</original>
    <variation>D</variation>
    <location>
        <position position="240"/>
    </location>
</feature>
<feature type="mutagenesis site" description="In prlA401; altered signal sequence interaction, transient transmembrane channels open.">
    <original>S</original>
    <variation>R</variation>
    <location>
        <position position="282"/>
    </location>
</feature>
<feature type="mutagenesis site" description="In prlA4-1; altered signal sequence interaction.">
    <original>F</original>
    <variation>Y</variation>
    <location>
        <position position="286"/>
    </location>
</feature>
<feature type="mutagenesis site" description="In secY161; altered signal sequence interaction.">
    <original>P</original>
    <variation>L</variation>
    <location>
        <position position="287"/>
    </location>
</feature>
<feature type="mutagenesis site" description="In secY121; altered signal sequence interaction.">
    <original>I</original>
    <variation>T</variation>
    <location>
        <position position="290"/>
    </location>
</feature>
<feature type="mutagenesis site" description="In secY39; cold-sensitive.">
    <original>R</original>
    <variation>H</variation>
    <location>
        <position position="357"/>
    </location>
</feature>
<feature type="mutagenesis site" description="In secY40; cold-sensitive.">
    <original>A</original>
    <variation>S</variation>
    <location>
        <position position="363"/>
    </location>
</feature>
<feature type="mutagenesis site" description="In prlA4-2; altered signal sequence interaction." evidence="4">
    <original>I</original>
    <variation>N</variation>
    <location>
        <position position="408"/>
    </location>
</feature>
<feature type="mutagenesis site" description="No longer complements secY24, a temperature-sensitive secY mutation." evidence="6">
    <location>
        <begin position="424"/>
        <end position="443"/>
    </location>
</feature>
<feature type="helix" evidence="10">
    <location>
        <begin position="17"/>
        <end position="36"/>
    </location>
</feature>
<feature type="strand" evidence="10">
    <location>
        <begin position="41"/>
        <end position="44"/>
    </location>
</feature>
<feature type="helix" evidence="10">
    <location>
        <begin position="46"/>
        <end position="52"/>
    </location>
</feature>
<feature type="helix" evidence="10">
    <location>
        <begin position="59"/>
        <end position="65"/>
    </location>
</feature>
<feature type="turn" evidence="10">
    <location>
        <begin position="66"/>
        <end position="69"/>
    </location>
</feature>
<feature type="turn" evidence="10">
    <location>
        <begin position="71"/>
        <end position="75"/>
    </location>
</feature>
<feature type="helix" evidence="10">
    <location>
        <begin position="83"/>
        <end position="98"/>
    </location>
</feature>
<feature type="helix" evidence="10">
    <location>
        <begin position="100"/>
        <end position="106"/>
    </location>
</feature>
<feature type="helix" evidence="10">
    <location>
        <begin position="110"/>
        <end position="138"/>
    </location>
</feature>
<feature type="helix" evidence="10">
    <location>
        <begin position="155"/>
        <end position="176"/>
    </location>
</feature>
<feature type="turn" evidence="10">
    <location>
        <begin position="178"/>
        <end position="181"/>
    </location>
</feature>
<feature type="strand" evidence="10">
    <location>
        <begin position="182"/>
        <end position="184"/>
    </location>
</feature>
<feature type="helix" evidence="10">
    <location>
        <begin position="186"/>
        <end position="196"/>
    </location>
</feature>
<feature type="helix" evidence="10">
    <location>
        <begin position="200"/>
        <end position="208"/>
    </location>
</feature>
<feature type="turn" evidence="10">
    <location>
        <begin position="209"/>
        <end position="213"/>
    </location>
</feature>
<feature type="helix" evidence="10">
    <location>
        <begin position="217"/>
        <end position="239"/>
    </location>
</feature>
<feature type="strand" evidence="10">
    <location>
        <begin position="242"/>
        <end position="251"/>
    </location>
</feature>
<feature type="strand" evidence="10">
    <location>
        <begin position="258"/>
        <end position="267"/>
    </location>
</feature>
<feature type="strand" evidence="10">
    <location>
        <begin position="269"/>
        <end position="272"/>
    </location>
</feature>
<feature type="helix" evidence="10">
    <location>
        <begin position="274"/>
        <end position="290"/>
    </location>
</feature>
<feature type="turn" evidence="10">
    <location>
        <begin position="291"/>
        <end position="294"/>
    </location>
</feature>
<feature type="helix" evidence="10">
    <location>
        <begin position="301"/>
        <end position="309"/>
    </location>
</feature>
<feature type="helix" evidence="10">
    <location>
        <begin position="315"/>
        <end position="336"/>
    </location>
</feature>
<feature type="helix" evidence="10">
    <location>
        <begin position="339"/>
        <end position="348"/>
    </location>
</feature>
<feature type="helix" evidence="10">
    <location>
        <begin position="360"/>
        <end position="394"/>
    </location>
</feature>
<feature type="strand" evidence="10">
    <location>
        <begin position="401"/>
        <end position="403"/>
    </location>
</feature>
<feature type="helix" evidence="10">
    <location>
        <begin position="404"/>
        <end position="426"/>
    </location>
</feature>
<organism>
    <name type="scientific">Escherichia coli (strain K12)</name>
    <dbReference type="NCBI Taxonomy" id="83333"/>
    <lineage>
        <taxon>Bacteria</taxon>
        <taxon>Pseudomonadati</taxon>
        <taxon>Pseudomonadota</taxon>
        <taxon>Gammaproteobacteria</taxon>
        <taxon>Enterobacterales</taxon>
        <taxon>Enterobacteriaceae</taxon>
        <taxon>Escherichia</taxon>
    </lineage>
</organism>